<sequence length="97" mass="10387">MNIRPLHDRVIVKRKEVETKSAGGIVLTGSAAAKSTRGEVLAVGNGRILENGEVKPLDVKVGDIVIFNDGYGVKSEKIDNEEVLIMSESDILAIVEA</sequence>
<feature type="chain" id="PRO_0000174837" description="Co-chaperonin GroES">
    <location>
        <begin position="1"/>
        <end position="97"/>
    </location>
</feature>
<dbReference type="EMBL" id="AE005674">
    <property type="protein sequence ID" value="AAN45714.1"/>
    <property type="molecule type" value="Genomic_DNA"/>
</dbReference>
<dbReference type="EMBL" id="AE014073">
    <property type="protein sequence ID" value="AAP19500.1"/>
    <property type="molecule type" value="Genomic_DNA"/>
</dbReference>
<dbReference type="RefSeq" id="NP_710007.1">
    <property type="nucleotide sequence ID" value="NC_004337.2"/>
</dbReference>
<dbReference type="RefSeq" id="WP_001026276.1">
    <property type="nucleotide sequence ID" value="NZ_WPGW01000108.1"/>
</dbReference>
<dbReference type="SMR" id="P0A6G2"/>
<dbReference type="STRING" id="198214.SF4296"/>
<dbReference type="PaxDb" id="198214-SF4296"/>
<dbReference type="GeneID" id="1026575"/>
<dbReference type="KEGG" id="sfl:SF4296"/>
<dbReference type="KEGG" id="sfx:S4563"/>
<dbReference type="PATRIC" id="fig|198214.7.peg.5066"/>
<dbReference type="HOGENOM" id="CLU_132825_1_1_6"/>
<dbReference type="Proteomes" id="UP000001006">
    <property type="component" value="Chromosome"/>
</dbReference>
<dbReference type="Proteomes" id="UP000002673">
    <property type="component" value="Chromosome"/>
</dbReference>
<dbReference type="GO" id="GO:0005737">
    <property type="term" value="C:cytoplasm"/>
    <property type="evidence" value="ECO:0007669"/>
    <property type="project" value="UniProtKB-SubCell"/>
</dbReference>
<dbReference type="GO" id="GO:0005524">
    <property type="term" value="F:ATP binding"/>
    <property type="evidence" value="ECO:0007669"/>
    <property type="project" value="InterPro"/>
</dbReference>
<dbReference type="GO" id="GO:0046872">
    <property type="term" value="F:metal ion binding"/>
    <property type="evidence" value="ECO:0007669"/>
    <property type="project" value="TreeGrafter"/>
</dbReference>
<dbReference type="GO" id="GO:0044183">
    <property type="term" value="F:protein folding chaperone"/>
    <property type="evidence" value="ECO:0007669"/>
    <property type="project" value="InterPro"/>
</dbReference>
<dbReference type="GO" id="GO:0051087">
    <property type="term" value="F:protein-folding chaperone binding"/>
    <property type="evidence" value="ECO:0007669"/>
    <property type="project" value="TreeGrafter"/>
</dbReference>
<dbReference type="GO" id="GO:0051082">
    <property type="term" value="F:unfolded protein binding"/>
    <property type="evidence" value="ECO:0007669"/>
    <property type="project" value="TreeGrafter"/>
</dbReference>
<dbReference type="GO" id="GO:0051085">
    <property type="term" value="P:chaperone cofactor-dependent protein refolding"/>
    <property type="evidence" value="ECO:0007669"/>
    <property type="project" value="TreeGrafter"/>
</dbReference>
<dbReference type="CDD" id="cd00320">
    <property type="entry name" value="cpn10"/>
    <property type="match status" value="1"/>
</dbReference>
<dbReference type="FunFam" id="2.30.33.40:FF:000001">
    <property type="entry name" value="10 kDa chaperonin"/>
    <property type="match status" value="1"/>
</dbReference>
<dbReference type="Gene3D" id="2.30.33.40">
    <property type="entry name" value="GroES chaperonin"/>
    <property type="match status" value="1"/>
</dbReference>
<dbReference type="HAMAP" id="MF_00580">
    <property type="entry name" value="CH10"/>
    <property type="match status" value="1"/>
</dbReference>
<dbReference type="InterPro" id="IPR020818">
    <property type="entry name" value="Chaperonin_GroES"/>
</dbReference>
<dbReference type="InterPro" id="IPR037124">
    <property type="entry name" value="Chaperonin_GroES_sf"/>
</dbReference>
<dbReference type="InterPro" id="IPR018369">
    <property type="entry name" value="Chaprnonin_Cpn10_CS"/>
</dbReference>
<dbReference type="InterPro" id="IPR011032">
    <property type="entry name" value="GroES-like_sf"/>
</dbReference>
<dbReference type="NCBIfam" id="NF001526">
    <property type="entry name" value="PRK00364.1-1"/>
    <property type="match status" value="1"/>
</dbReference>
<dbReference type="NCBIfam" id="NF001527">
    <property type="entry name" value="PRK00364.1-2"/>
    <property type="match status" value="1"/>
</dbReference>
<dbReference type="NCBIfam" id="NF001531">
    <property type="entry name" value="PRK00364.2-2"/>
    <property type="match status" value="1"/>
</dbReference>
<dbReference type="PANTHER" id="PTHR10772">
    <property type="entry name" value="10 KDA HEAT SHOCK PROTEIN"/>
    <property type="match status" value="1"/>
</dbReference>
<dbReference type="PANTHER" id="PTHR10772:SF58">
    <property type="entry name" value="CO-CHAPERONIN GROES"/>
    <property type="match status" value="1"/>
</dbReference>
<dbReference type="Pfam" id="PF00166">
    <property type="entry name" value="Cpn10"/>
    <property type="match status" value="1"/>
</dbReference>
<dbReference type="PRINTS" id="PR00297">
    <property type="entry name" value="CHAPERONIN10"/>
</dbReference>
<dbReference type="SMART" id="SM00883">
    <property type="entry name" value="Cpn10"/>
    <property type="match status" value="1"/>
</dbReference>
<dbReference type="SUPFAM" id="SSF50129">
    <property type="entry name" value="GroES-like"/>
    <property type="match status" value="1"/>
</dbReference>
<dbReference type="PROSITE" id="PS00681">
    <property type="entry name" value="CHAPERONINS_CPN10"/>
    <property type="match status" value="1"/>
</dbReference>
<accession>P0A6G2</accession>
<accession>P05380</accession>
<organism>
    <name type="scientific">Shigella flexneri</name>
    <dbReference type="NCBI Taxonomy" id="623"/>
    <lineage>
        <taxon>Bacteria</taxon>
        <taxon>Pseudomonadati</taxon>
        <taxon>Pseudomonadota</taxon>
        <taxon>Gammaproteobacteria</taxon>
        <taxon>Enterobacterales</taxon>
        <taxon>Enterobacteriaceae</taxon>
        <taxon>Shigella</taxon>
    </lineage>
</organism>
<keyword id="KW-0143">Chaperone</keyword>
<keyword id="KW-0963">Cytoplasm</keyword>
<keyword id="KW-1185">Reference proteome</keyword>
<comment type="function">
    <text evidence="1">Together with the chaperonin GroEL, plays an essential role in assisting protein folding. The GroEL-GroES system forms a nano-cage that allows encapsulation of the non-native substrate proteins and provides a physical environment optimized to promote and accelerate protein folding. GroES binds to the apical surface of the GroEL ring, thereby capping the opening of the GroEL channel.</text>
</comment>
<comment type="subunit">
    <text evidence="1">Heptamer of 7 subunits arranged in a ring. Interacts with the chaperonin GroEL.</text>
</comment>
<comment type="subcellular location">
    <subcellularLocation>
        <location evidence="1">Cytoplasm</location>
    </subcellularLocation>
</comment>
<comment type="similarity">
    <text evidence="1 2">Belongs to the GroES chaperonin family.</text>
</comment>
<protein>
    <recommendedName>
        <fullName evidence="1">Co-chaperonin GroES</fullName>
    </recommendedName>
    <alternativeName>
        <fullName evidence="1">10 kDa chaperonin</fullName>
    </alternativeName>
    <alternativeName>
        <fullName evidence="1">Chaperonin-10</fullName>
        <shortName evidence="1">Cpn10</shortName>
    </alternativeName>
</protein>
<reference key="1">
    <citation type="journal article" date="2002" name="Nucleic Acids Res.">
        <title>Genome sequence of Shigella flexneri 2a: insights into pathogenicity through comparison with genomes of Escherichia coli K12 and O157.</title>
        <authorList>
            <person name="Jin Q."/>
            <person name="Yuan Z."/>
            <person name="Xu J."/>
            <person name="Wang Y."/>
            <person name="Shen Y."/>
            <person name="Lu W."/>
            <person name="Wang J."/>
            <person name="Liu H."/>
            <person name="Yang J."/>
            <person name="Yang F."/>
            <person name="Zhang X."/>
            <person name="Zhang J."/>
            <person name="Yang G."/>
            <person name="Wu H."/>
            <person name="Qu D."/>
            <person name="Dong J."/>
            <person name="Sun L."/>
            <person name="Xue Y."/>
            <person name="Zhao A."/>
            <person name="Gao Y."/>
            <person name="Zhu J."/>
            <person name="Kan B."/>
            <person name="Ding K."/>
            <person name="Chen S."/>
            <person name="Cheng H."/>
            <person name="Yao Z."/>
            <person name="He B."/>
            <person name="Chen R."/>
            <person name="Ma D."/>
            <person name="Qiang B."/>
            <person name="Wen Y."/>
            <person name="Hou Y."/>
            <person name="Yu J."/>
        </authorList>
    </citation>
    <scope>NUCLEOTIDE SEQUENCE [LARGE SCALE GENOMIC DNA]</scope>
    <source>
        <strain>301 / Serotype 2a</strain>
    </source>
</reference>
<reference key="2">
    <citation type="journal article" date="2003" name="Infect. Immun.">
        <title>Complete genome sequence and comparative genomics of Shigella flexneri serotype 2a strain 2457T.</title>
        <authorList>
            <person name="Wei J."/>
            <person name="Goldberg M.B."/>
            <person name="Burland V."/>
            <person name="Venkatesan M.M."/>
            <person name="Deng W."/>
            <person name="Fournier G."/>
            <person name="Mayhew G.F."/>
            <person name="Plunkett G. III"/>
            <person name="Rose D.J."/>
            <person name="Darling A."/>
            <person name="Mau B."/>
            <person name="Perna N.T."/>
            <person name="Payne S.M."/>
            <person name="Runyen-Janecky L.J."/>
            <person name="Zhou S."/>
            <person name="Schwartz D.C."/>
            <person name="Blattner F.R."/>
        </authorList>
    </citation>
    <scope>NUCLEOTIDE SEQUENCE [LARGE SCALE GENOMIC DNA]</scope>
    <source>
        <strain>ATCC 700930 / 2457T / Serotype 2a</strain>
    </source>
</reference>
<gene>
    <name evidence="1" type="primary">groES</name>
    <name evidence="1" type="synonym">groS</name>
    <name type="synonym">mopB</name>
    <name type="ordered locus">SF4296</name>
    <name type="ordered locus">S4563</name>
</gene>
<name>CH10_SHIFL</name>
<evidence type="ECO:0000255" key="1">
    <source>
        <dbReference type="HAMAP-Rule" id="MF_00580"/>
    </source>
</evidence>
<evidence type="ECO:0000305" key="2"/>
<proteinExistence type="inferred from homology"/>